<name>FAD3_RICFE</name>
<gene>
    <name type="ordered locus">RF_0890</name>
</gene>
<organism>
    <name type="scientific">Rickettsia felis (strain ATCC VR-1525 / URRWXCal2)</name>
    <name type="common">Rickettsia azadi</name>
    <dbReference type="NCBI Taxonomy" id="315456"/>
    <lineage>
        <taxon>Bacteria</taxon>
        <taxon>Pseudomonadati</taxon>
        <taxon>Pseudomonadota</taxon>
        <taxon>Alphaproteobacteria</taxon>
        <taxon>Rickettsiales</taxon>
        <taxon>Rickettsiaceae</taxon>
        <taxon>Rickettsieae</taxon>
        <taxon>Rickettsia</taxon>
        <taxon>spotted fever group</taxon>
    </lineage>
</organism>
<evidence type="ECO:0000305" key="1"/>
<protein>
    <recommendedName>
        <fullName>Putative fatty acid oxidation complex trifunctional enzyme</fullName>
    </recommendedName>
    <domain>
        <recommendedName>
            <fullName>3-hydroxyacyl-CoA dehydrogenase</fullName>
            <ecNumber>1.1.1.35</ecNumber>
        </recommendedName>
    </domain>
    <domain>
        <recommendedName>
            <fullName>Enoyl-CoA hydratase/Delta(3)-cis-Delta(2)-trans-enoyl-CoA isomerase</fullName>
            <ecNumber>4.2.1.17</ecNumber>
            <ecNumber>5.3.3.8</ecNumber>
        </recommendedName>
    </domain>
</protein>
<reference key="1">
    <citation type="journal article" date="2005" name="PLoS Biol.">
        <title>The genome sequence of Rickettsia felis identifies the first putative conjugative plasmid in an obligate intracellular parasite.</title>
        <authorList>
            <person name="Ogata H."/>
            <person name="Renesto P."/>
            <person name="Audic S."/>
            <person name="Robert C."/>
            <person name="Blanc G."/>
            <person name="Fournier P.-E."/>
            <person name="Parinello H."/>
            <person name="Claverie J.-M."/>
            <person name="Raoult D."/>
        </authorList>
    </citation>
    <scope>NUCLEOTIDE SEQUENCE [LARGE SCALE GENOMIC DNA]</scope>
    <source>
        <strain>ATCC VR-1525 / URRWXCal2</strain>
    </source>
</reference>
<keyword id="KW-0276">Fatty acid metabolism</keyword>
<keyword id="KW-0413">Isomerase</keyword>
<keyword id="KW-0443">Lipid metabolism</keyword>
<keyword id="KW-0456">Lyase</keyword>
<keyword id="KW-0511">Multifunctional enzyme</keyword>
<keyword id="KW-0520">NAD</keyword>
<keyword id="KW-0560">Oxidoreductase</keyword>
<feature type="chain" id="PRO_0000285697" description="Putative fatty acid oxidation complex trifunctional enzyme">
    <location>
        <begin position="1"/>
        <end position="720"/>
    </location>
</feature>
<feature type="region of interest" description="3-hydroxyacyl-CoA dehydrogenase">
    <location>
        <begin position="1"/>
        <end position="384"/>
    </location>
</feature>
<feature type="region of interest" description="Enoyl-CoA hydratase/isomerase">
    <location>
        <begin position="453"/>
        <end position="720"/>
    </location>
</feature>
<proteinExistence type="inferred from homology"/>
<sequence length="720" mass="81043">MQNEIKKVCVIGSGVMGSGIAALIANSSHKVVLLDIIAKDSDDPNKIVKTAKENLHKQKPPPLSFPDKVNFITIGNLEHDLELIRDCDLVIEVIVEKLEIKHQLYNKIIPYLKEDAIIASNTSTLPLKRLKENLPDNIKSRFVITHFFNPPRYMELLELIIDSMVKFEVIERVSGFLTKTLGKTIVKCNDTPGFIANRVGCFLLELVARKAISQKLDFVALDKIFTICLGLPSTGIFGLYDLIGHDVMKLISSSLLAALPANDAYHKIYVNTPVLDKMIEKKLIGRKGEGGFYRLSVSNGKKIKEVININDLSYSSVQKVDISFNNLDELLVSDSVYGKIFTEIITEFYVYLASLVPSVTDNIYDIDAAMKLGYSWKYGPFELLTIAAKDGWNSVIKNADLMHIPLPQYLGNKEYQKIDKQKFNSHKDILQESQIVLENDSAKLINYRENFIFVITTKMNCLNHNVFYLLQEAASKAEKDGKNLYIYPQGNNFSAGADLKLLLSYIEDGNFHDLENLLKLGQQTMLHLKYSGVHIISCAKGVALGGGCELLLYSSYIVANQELNAGLVELGVGLIPGWGGVTEMFVRSKGDKTKLIRNVRNIIEQNKTSSADYFKSDYDVESMHVNMNKHYILDEALKLNLSKKIVPIPHKITLPKINLATEIDTSKYNDLQNKVLSKFQNIIDKHPDTNEEELLGYEREIFLELAKDPKTIEKLKAIVK</sequence>
<accession>Q4UL32</accession>
<dbReference type="EC" id="1.1.1.35"/>
<dbReference type="EC" id="4.2.1.17"/>
<dbReference type="EC" id="5.3.3.8"/>
<dbReference type="EMBL" id="CP000053">
    <property type="protein sequence ID" value="AAY61741.1"/>
    <property type="molecule type" value="Genomic_DNA"/>
</dbReference>
<dbReference type="SMR" id="Q4UL32"/>
<dbReference type="STRING" id="315456.RF_0890"/>
<dbReference type="KEGG" id="rfe:RF_0890"/>
<dbReference type="eggNOG" id="COG1024">
    <property type="taxonomic scope" value="Bacteria"/>
</dbReference>
<dbReference type="eggNOG" id="COG1250">
    <property type="taxonomic scope" value="Bacteria"/>
</dbReference>
<dbReference type="HOGENOM" id="CLU_010448_0_0_5"/>
<dbReference type="OrthoDB" id="5389341at2"/>
<dbReference type="Proteomes" id="UP000008548">
    <property type="component" value="Chromosome"/>
</dbReference>
<dbReference type="GO" id="GO:0003857">
    <property type="term" value="F:3-hydroxyacyl-CoA dehydrogenase activity"/>
    <property type="evidence" value="ECO:0007669"/>
    <property type="project" value="UniProtKB-EC"/>
</dbReference>
<dbReference type="GO" id="GO:0004165">
    <property type="term" value="F:delta(3)-delta(2)-enoyl-CoA isomerase activity"/>
    <property type="evidence" value="ECO:0007669"/>
    <property type="project" value="UniProtKB-EC"/>
</dbReference>
<dbReference type="GO" id="GO:0004300">
    <property type="term" value="F:enoyl-CoA hydratase activity"/>
    <property type="evidence" value="ECO:0007669"/>
    <property type="project" value="UniProtKB-EC"/>
</dbReference>
<dbReference type="GO" id="GO:0070403">
    <property type="term" value="F:NAD+ binding"/>
    <property type="evidence" value="ECO:0007669"/>
    <property type="project" value="InterPro"/>
</dbReference>
<dbReference type="GO" id="GO:0009056">
    <property type="term" value="P:catabolic process"/>
    <property type="evidence" value="ECO:0007669"/>
    <property type="project" value="UniProtKB-ARBA"/>
</dbReference>
<dbReference type="GO" id="GO:0006631">
    <property type="term" value="P:fatty acid metabolic process"/>
    <property type="evidence" value="ECO:0007669"/>
    <property type="project" value="UniProtKB-KW"/>
</dbReference>
<dbReference type="CDD" id="cd06558">
    <property type="entry name" value="crotonase-like"/>
    <property type="match status" value="1"/>
</dbReference>
<dbReference type="Gene3D" id="1.10.1040.50">
    <property type="match status" value="1"/>
</dbReference>
<dbReference type="Gene3D" id="3.90.226.10">
    <property type="entry name" value="2-enoyl-CoA Hydratase, Chain A, domain 1"/>
    <property type="match status" value="1"/>
</dbReference>
<dbReference type="Gene3D" id="3.40.50.720">
    <property type="entry name" value="NAD(P)-binding Rossmann-like Domain"/>
    <property type="match status" value="1"/>
</dbReference>
<dbReference type="InterPro" id="IPR006176">
    <property type="entry name" value="3-OHacyl-CoA_DH_NAD-bd"/>
</dbReference>
<dbReference type="InterPro" id="IPR006108">
    <property type="entry name" value="3HC_DH_C"/>
</dbReference>
<dbReference type="InterPro" id="IPR008927">
    <property type="entry name" value="6-PGluconate_DH-like_C_sf"/>
</dbReference>
<dbReference type="InterPro" id="IPR029045">
    <property type="entry name" value="ClpP/crotonase-like_dom_sf"/>
</dbReference>
<dbReference type="InterPro" id="IPR045004">
    <property type="entry name" value="ECH_dom"/>
</dbReference>
<dbReference type="InterPro" id="IPR036291">
    <property type="entry name" value="NAD(P)-bd_dom_sf"/>
</dbReference>
<dbReference type="PANTHER" id="PTHR48075">
    <property type="entry name" value="3-HYDROXYACYL-COA DEHYDROGENASE FAMILY PROTEIN"/>
    <property type="match status" value="1"/>
</dbReference>
<dbReference type="PANTHER" id="PTHR48075:SF7">
    <property type="entry name" value="3-HYDROXYACYL-COA DEHYDROGENASE-RELATED"/>
    <property type="match status" value="1"/>
</dbReference>
<dbReference type="Pfam" id="PF00725">
    <property type="entry name" value="3HCDH"/>
    <property type="match status" value="1"/>
</dbReference>
<dbReference type="Pfam" id="PF02737">
    <property type="entry name" value="3HCDH_N"/>
    <property type="match status" value="1"/>
</dbReference>
<dbReference type="Pfam" id="PF16113">
    <property type="entry name" value="ECH_2"/>
    <property type="match status" value="1"/>
</dbReference>
<dbReference type="SUPFAM" id="SSF48179">
    <property type="entry name" value="6-phosphogluconate dehydrogenase C-terminal domain-like"/>
    <property type="match status" value="2"/>
</dbReference>
<dbReference type="SUPFAM" id="SSF52096">
    <property type="entry name" value="ClpP/crotonase"/>
    <property type="match status" value="1"/>
</dbReference>
<dbReference type="SUPFAM" id="SSF51735">
    <property type="entry name" value="NAD(P)-binding Rossmann-fold domains"/>
    <property type="match status" value="1"/>
</dbReference>
<comment type="catalytic activity">
    <reaction>
        <text>a (3S)-3-hydroxyacyl-CoA + NAD(+) = a 3-oxoacyl-CoA + NADH + H(+)</text>
        <dbReference type="Rhea" id="RHEA:22432"/>
        <dbReference type="ChEBI" id="CHEBI:15378"/>
        <dbReference type="ChEBI" id="CHEBI:57318"/>
        <dbReference type="ChEBI" id="CHEBI:57540"/>
        <dbReference type="ChEBI" id="CHEBI:57945"/>
        <dbReference type="ChEBI" id="CHEBI:90726"/>
        <dbReference type="EC" id="1.1.1.35"/>
    </reaction>
</comment>
<comment type="catalytic activity">
    <reaction>
        <text>a (3S)-3-hydroxyacyl-CoA = a (2E)-enoyl-CoA + H2O</text>
        <dbReference type="Rhea" id="RHEA:16105"/>
        <dbReference type="ChEBI" id="CHEBI:15377"/>
        <dbReference type="ChEBI" id="CHEBI:57318"/>
        <dbReference type="ChEBI" id="CHEBI:58856"/>
        <dbReference type="EC" id="4.2.1.17"/>
    </reaction>
</comment>
<comment type="catalytic activity">
    <reaction>
        <text>a 4-saturated-(3S)-3-hydroxyacyl-CoA = a (3E)-enoyl-CoA + H2O</text>
        <dbReference type="Rhea" id="RHEA:20724"/>
        <dbReference type="ChEBI" id="CHEBI:15377"/>
        <dbReference type="ChEBI" id="CHEBI:58521"/>
        <dbReference type="ChEBI" id="CHEBI:137480"/>
        <dbReference type="EC" id="4.2.1.17"/>
    </reaction>
</comment>
<comment type="catalytic activity">
    <reaction>
        <text>a (3Z)-enoyl-CoA = a 4-saturated (2E)-enoyl-CoA</text>
        <dbReference type="Rhea" id="RHEA:45900"/>
        <dbReference type="ChEBI" id="CHEBI:85097"/>
        <dbReference type="ChEBI" id="CHEBI:85489"/>
        <dbReference type="EC" id="5.3.3.8"/>
    </reaction>
</comment>
<comment type="catalytic activity">
    <reaction>
        <text>a (3E)-enoyl-CoA = a 4-saturated (2E)-enoyl-CoA</text>
        <dbReference type="Rhea" id="RHEA:45228"/>
        <dbReference type="ChEBI" id="CHEBI:58521"/>
        <dbReference type="ChEBI" id="CHEBI:85097"/>
        <dbReference type="EC" id="5.3.3.8"/>
    </reaction>
</comment>
<comment type="similarity">
    <text evidence="1">In the N-terminal section; belongs to the 3-hydroxyacyl-CoA dehydrogenase family.</text>
</comment>
<comment type="similarity">
    <text evidence="1">In the C-terminal section; belongs to the enoyl-CoA hydratase/isomerase family.</text>
</comment>